<sequence>MYIVQIASECAPVIKAGGLGDVIYGLSRELELRGHCVELILPMYDCMRYDHIWGLHDAYRNLEVPWYGSSIFCDVFCGWVHGRLCFFIQPKSSDNFFNRGHYYGALDDHMRFAFFSKAAMEFLLRSNKRPDIIHCHDWQTGLVPVLLYEIYRFHGMDHQRVCYTIHNFKHQGIAGANILHATGLNNDSYYFSYDRLQDNFNPNAINFMKGGIVYSNYVNTVSPHHAWEARFSDISCGLGHTLEIHQQKFGGILNGLDYEVWNPEIDPLLASNFSVKTFGDKAKNKQALRERLLLETDDKKPMLCFIGRLDGQKGVHLVHHSIYYALSQGAQFVLLGSATEPNLSKWFWHEKQHLNDNPNVHLELGFDEELAHLIYGAADIIVVPSNYEPCGLTQMIGLRYGAVPVVRGVGGLVNTVFDRDYDQNHPPEKRNGFVFYQPDEYALETALSRAIALYKDDPVAFKTLALQGMAYDYSWNKPGLQYVEAYEYIRA</sequence>
<gene>
    <name type="primary">glgA2</name>
    <name type="ordered locus">sll1393</name>
</gene>
<dbReference type="EC" id="2.4.1.21"/>
<dbReference type="EMBL" id="BA000022">
    <property type="protein sequence ID" value="BAA16625.1"/>
    <property type="molecule type" value="Genomic_DNA"/>
</dbReference>
<dbReference type="PIR" id="S74473">
    <property type="entry name" value="S74473"/>
</dbReference>
<dbReference type="SMR" id="P72623"/>
<dbReference type="IntAct" id="P72623">
    <property type="interactions" value="6"/>
</dbReference>
<dbReference type="STRING" id="1148.gene:10497480"/>
<dbReference type="CAZy" id="GT5">
    <property type="family name" value="Glycosyltransferase Family 5"/>
</dbReference>
<dbReference type="PaxDb" id="1148-1651697"/>
<dbReference type="EnsemblBacteria" id="BAA16625">
    <property type="protein sequence ID" value="BAA16625"/>
    <property type="gene ID" value="BAA16625"/>
</dbReference>
<dbReference type="KEGG" id="syn:sll1393"/>
<dbReference type="eggNOG" id="COG0297">
    <property type="taxonomic scope" value="Bacteria"/>
</dbReference>
<dbReference type="InParanoid" id="P72623"/>
<dbReference type="PhylomeDB" id="P72623"/>
<dbReference type="UniPathway" id="UPA00164"/>
<dbReference type="Proteomes" id="UP000001425">
    <property type="component" value="Chromosome"/>
</dbReference>
<dbReference type="GO" id="GO:0009011">
    <property type="term" value="F:alpha-1,4-glucan glucosyltransferase (ADP-glucose donor) activity"/>
    <property type="evidence" value="ECO:0007669"/>
    <property type="project" value="UniProtKB-UniRule"/>
</dbReference>
<dbReference type="GO" id="GO:0004373">
    <property type="term" value="F:alpha-1,4-glucan glucosyltransferase (UDP-glucose donor) activity"/>
    <property type="evidence" value="ECO:0007669"/>
    <property type="project" value="InterPro"/>
</dbReference>
<dbReference type="GO" id="GO:0005978">
    <property type="term" value="P:glycogen biosynthetic process"/>
    <property type="evidence" value="ECO:0007669"/>
    <property type="project" value="UniProtKB-UniRule"/>
</dbReference>
<dbReference type="CDD" id="cd03791">
    <property type="entry name" value="GT5_Glycogen_synthase_DULL1-like"/>
    <property type="match status" value="1"/>
</dbReference>
<dbReference type="Gene3D" id="3.40.50.2000">
    <property type="entry name" value="Glycogen Phosphorylase B"/>
    <property type="match status" value="2"/>
</dbReference>
<dbReference type="HAMAP" id="MF_00484">
    <property type="entry name" value="Glycogen_synth"/>
    <property type="match status" value="1"/>
</dbReference>
<dbReference type="InterPro" id="IPR001296">
    <property type="entry name" value="Glyco_trans_1"/>
</dbReference>
<dbReference type="InterPro" id="IPR011835">
    <property type="entry name" value="GS/SS"/>
</dbReference>
<dbReference type="InterPro" id="IPR013534">
    <property type="entry name" value="Starch_synth_cat_dom"/>
</dbReference>
<dbReference type="NCBIfam" id="TIGR02095">
    <property type="entry name" value="glgA"/>
    <property type="match status" value="1"/>
</dbReference>
<dbReference type="NCBIfam" id="NF001902">
    <property type="entry name" value="PRK00654.2-1"/>
    <property type="match status" value="1"/>
</dbReference>
<dbReference type="NCBIfam" id="NF001905">
    <property type="entry name" value="PRK00654.2-4"/>
    <property type="match status" value="1"/>
</dbReference>
<dbReference type="PANTHER" id="PTHR46083">
    <property type="match status" value="1"/>
</dbReference>
<dbReference type="PANTHER" id="PTHR46083:SF1">
    <property type="entry name" value="GLYCOGEN SYNTHASE 2-RELATED"/>
    <property type="match status" value="1"/>
</dbReference>
<dbReference type="Pfam" id="PF08323">
    <property type="entry name" value="Glyco_transf_5"/>
    <property type="match status" value="1"/>
</dbReference>
<dbReference type="Pfam" id="PF00534">
    <property type="entry name" value="Glycos_transf_1"/>
    <property type="match status" value="1"/>
</dbReference>
<dbReference type="SUPFAM" id="SSF53756">
    <property type="entry name" value="UDP-Glycosyltransferase/glycogen phosphorylase"/>
    <property type="match status" value="1"/>
</dbReference>
<feature type="chain" id="PRO_0000188656" description="Probable glycogen synthase 2">
    <location>
        <begin position="1"/>
        <end position="491"/>
    </location>
</feature>
<feature type="binding site" evidence="1">
    <location>
        <position position="15"/>
    </location>
    <ligand>
        <name>ADP-alpha-D-glucose</name>
        <dbReference type="ChEBI" id="CHEBI:57498"/>
    </ligand>
</feature>
<comment type="function">
    <text evidence="1">Synthesizes alpha-1,4-glucan chains using ADP-glucose.</text>
</comment>
<comment type="catalytic activity">
    <reaction>
        <text>[(1-&gt;4)-alpha-D-glucosyl](n) + ADP-alpha-D-glucose = [(1-&gt;4)-alpha-D-glucosyl](n+1) + ADP + H(+)</text>
        <dbReference type="Rhea" id="RHEA:18189"/>
        <dbReference type="Rhea" id="RHEA-COMP:9584"/>
        <dbReference type="Rhea" id="RHEA-COMP:9587"/>
        <dbReference type="ChEBI" id="CHEBI:15378"/>
        <dbReference type="ChEBI" id="CHEBI:15444"/>
        <dbReference type="ChEBI" id="CHEBI:57498"/>
        <dbReference type="ChEBI" id="CHEBI:456216"/>
        <dbReference type="EC" id="2.4.1.21"/>
    </reaction>
</comment>
<comment type="pathway">
    <text>Glycan biosynthesis; glycogen biosynthesis.</text>
</comment>
<comment type="similarity">
    <text evidence="2">Belongs to the glycosyltransferase 1 family. Bacterial/plant glycogen synthase subfamily.</text>
</comment>
<accession>P72623</accession>
<name>GLGA2_SYNY3</name>
<organism>
    <name type="scientific">Synechocystis sp. (strain ATCC 27184 / PCC 6803 / Kazusa)</name>
    <dbReference type="NCBI Taxonomy" id="1111708"/>
    <lineage>
        <taxon>Bacteria</taxon>
        <taxon>Bacillati</taxon>
        <taxon>Cyanobacteriota</taxon>
        <taxon>Cyanophyceae</taxon>
        <taxon>Synechococcales</taxon>
        <taxon>Merismopediaceae</taxon>
        <taxon>Synechocystis</taxon>
    </lineage>
</organism>
<keyword id="KW-0320">Glycogen biosynthesis</keyword>
<keyword id="KW-0328">Glycosyltransferase</keyword>
<keyword id="KW-1185">Reference proteome</keyword>
<keyword id="KW-0808">Transferase</keyword>
<reference key="1">
    <citation type="journal article" date="1996" name="DNA Res.">
        <title>Sequence analysis of the genome of the unicellular cyanobacterium Synechocystis sp. strain PCC6803. II. Sequence determination of the entire genome and assignment of potential protein-coding regions.</title>
        <authorList>
            <person name="Kaneko T."/>
            <person name="Sato S."/>
            <person name="Kotani H."/>
            <person name="Tanaka A."/>
            <person name="Asamizu E."/>
            <person name="Nakamura Y."/>
            <person name="Miyajima N."/>
            <person name="Hirosawa M."/>
            <person name="Sugiura M."/>
            <person name="Sasamoto S."/>
            <person name="Kimura T."/>
            <person name="Hosouchi T."/>
            <person name="Matsuno A."/>
            <person name="Muraki A."/>
            <person name="Nakazaki N."/>
            <person name="Naruo K."/>
            <person name="Okumura S."/>
            <person name="Shimpo S."/>
            <person name="Takeuchi C."/>
            <person name="Wada T."/>
            <person name="Watanabe A."/>
            <person name="Yamada M."/>
            <person name="Yasuda M."/>
            <person name="Tabata S."/>
        </authorList>
    </citation>
    <scope>NUCLEOTIDE SEQUENCE [LARGE SCALE GENOMIC DNA]</scope>
    <source>
        <strain>ATCC 27184 / PCC 6803 / Kazusa</strain>
    </source>
</reference>
<protein>
    <recommendedName>
        <fullName>Probable glycogen synthase 2</fullName>
        <ecNumber>2.4.1.21</ecNumber>
    </recommendedName>
    <alternativeName>
        <fullName>Starch [bacterial glycogen] synthase 2</fullName>
    </alternativeName>
</protein>
<proteinExistence type="inferred from homology"/>
<evidence type="ECO:0000250" key="1"/>
<evidence type="ECO:0000305" key="2"/>